<sequence length="184" mass="20572">MKLLAIVGTNADFSYNRFLDQFMAKRYKDQAEIEVYEIADLPRFKKEAQPDSKVEEFKNKIREADGVIFATPEYDHGIPSALKSAMEWTGSHAQGNADVMKMKPAMVLGTSYGIQGASRAQEEMREILLSPDQSANVLPGNEVLIGHAADKFDKNTGDLLDQETIHAIDLAFNNFVKFVEQAQK</sequence>
<gene>
    <name type="primary">nfr2</name>
    <name type="ordered locus">LJ_0549</name>
</gene>
<protein>
    <recommendedName>
        <fullName>NADH-dependent flavin reductase subunit 2</fullName>
        <ecNumber>1.5.1.36</ecNumber>
    </recommendedName>
</protein>
<proteinExistence type="evidence at protein level"/>
<organism>
    <name type="scientific">Lactobacillus johnsonii (strain CNCM I-12250 / La1 / NCC 533)</name>
    <dbReference type="NCBI Taxonomy" id="257314"/>
    <lineage>
        <taxon>Bacteria</taxon>
        <taxon>Bacillati</taxon>
        <taxon>Bacillota</taxon>
        <taxon>Bacilli</taxon>
        <taxon>Lactobacillales</taxon>
        <taxon>Lactobacillaceae</taxon>
        <taxon>Lactobacillus</taxon>
    </lineage>
</organism>
<feature type="chain" id="PRO_0000429767" description="NADH-dependent flavin reductase subunit 2">
    <location>
        <begin position="1"/>
        <end position="184"/>
    </location>
</feature>
<reference key="1">
    <citation type="journal article" date="2004" name="Proc. Natl. Acad. Sci. U.S.A.">
        <title>The genome sequence of the probiotic intestinal bacterium Lactobacillus johnsonii NCC 533.</title>
        <authorList>
            <person name="Pridmore R.D."/>
            <person name="Berger B."/>
            <person name="Desiere F."/>
            <person name="Vilanova D."/>
            <person name="Barretto C."/>
            <person name="Pittet A.-C."/>
            <person name="Zwahlen M.-C."/>
            <person name="Rouvet M."/>
            <person name="Altermann E."/>
            <person name="Barrangou R."/>
            <person name="Mollet B."/>
            <person name="Mercenier A."/>
            <person name="Klaenhammer T."/>
            <person name="Arigoni F."/>
            <person name="Schell M.A."/>
        </authorList>
    </citation>
    <scope>NUCLEOTIDE SEQUENCE [LARGE SCALE GENOMIC DNA]</scope>
    <source>
        <strain>CNCM I-1225 / La1 / NCC 533</strain>
    </source>
</reference>
<reference key="2">
    <citation type="journal article" date="2014" name="Appl. Environ. Microbiol.">
        <title>H(2)O(2) production in species of the Lactobacillus acidophilus group: a central role for a novel NADH-dependent flavin reductase.</title>
        <authorList>
            <person name="Hertzberger R."/>
            <person name="Arents J."/>
            <person name="Dekker H.L."/>
            <person name="Pridmore R.D."/>
            <person name="Gysler C."/>
            <person name="Kleerebezem M."/>
            <person name="de Mattos M.J."/>
        </authorList>
    </citation>
    <scope>IDENTIFICATION BY MASS SPECTROMETRY</scope>
    <scope>FUNCTION</scope>
    <scope>ROLE IN H(2)O(2) PRODUCTION</scope>
    <scope>SUBUNIT</scope>
    <scope>DISRUPTION PHENOTYPE</scope>
    <source>
        <strain>CNCM I-1225 / La1 / NCC 533</strain>
    </source>
</reference>
<name>NFR2_LACJO</name>
<accession>Q74HL8</accession>
<evidence type="ECO:0000269" key="1">
    <source>
    </source>
</evidence>
<evidence type="ECO:0000305" key="2"/>
<comment type="function">
    <text evidence="1">Component of an enzyme that catalyzes the reduction of free flavins (FMN, FAD and riboflavin) by NADH; the reduced flavins produced by this reaction likely spontaneously react with oxygen, yielding hydrogen peroxide. Is responsible for the major H(2)O(2) production in L.johnsonii in the presence of oxygen. Cannot use NADPH instead of NADH as the electron donor.</text>
</comment>
<comment type="catalytic activity">
    <reaction>
        <text>a reduced flavin + NAD(+) = an oxidized flavin + NADH + 2 H(+)</text>
        <dbReference type="Rhea" id="RHEA:31303"/>
        <dbReference type="ChEBI" id="CHEBI:15378"/>
        <dbReference type="ChEBI" id="CHEBI:57540"/>
        <dbReference type="ChEBI" id="CHEBI:57945"/>
        <dbReference type="ChEBI" id="CHEBI:60531"/>
        <dbReference type="ChEBI" id="CHEBI:62787"/>
        <dbReference type="EC" id="1.5.1.36"/>
    </reaction>
</comment>
<comment type="subunit">
    <text evidence="1">Requires LJ_0548 for activity, but the exact composition of the enzyme is unclear.</text>
</comment>
<comment type="disruption phenotype">
    <text evidence="1">Cells lacking both LJ_0548 and LJ_0549 completely lack the NADH-dependent flavin reductase activity detected in wild-type strain, and show a 40-fold reduction of hydrogen peroxide formation upon exposure to oxygen. Reductase activity and H(2)O(2) production in this mutant can only be restored by in trans complementation of both genes.</text>
</comment>
<comment type="similarity">
    <text evidence="2">Belongs to the NADH-dependent flavin reductase family.</text>
</comment>
<keyword id="KW-0285">Flavoprotein</keyword>
<keyword id="KW-0288">FMN</keyword>
<keyword id="KW-0520">NAD</keyword>
<keyword id="KW-0560">Oxidoreductase</keyword>
<dbReference type="EC" id="1.5.1.36"/>
<dbReference type="EMBL" id="AE017198">
    <property type="protein sequence ID" value="AAS09672.1"/>
    <property type="molecule type" value="Genomic_DNA"/>
</dbReference>
<dbReference type="RefSeq" id="WP_004898036.1">
    <property type="nucleotide sequence ID" value="NC_005362.1"/>
</dbReference>
<dbReference type="SMR" id="Q74HL8"/>
<dbReference type="GeneID" id="83571138"/>
<dbReference type="KEGG" id="ljo:LJ_0549"/>
<dbReference type="eggNOG" id="COG0431">
    <property type="taxonomic scope" value="Bacteria"/>
</dbReference>
<dbReference type="HOGENOM" id="CLU_055322_4_0_9"/>
<dbReference type="BRENDA" id="1.5.1.36">
    <property type="organism ID" value="2846"/>
</dbReference>
<dbReference type="Proteomes" id="UP000000581">
    <property type="component" value="Chromosome"/>
</dbReference>
<dbReference type="GO" id="GO:0005829">
    <property type="term" value="C:cytosol"/>
    <property type="evidence" value="ECO:0007669"/>
    <property type="project" value="TreeGrafter"/>
</dbReference>
<dbReference type="GO" id="GO:0036382">
    <property type="term" value="F:flavin reductase (NADH) activity"/>
    <property type="evidence" value="ECO:0007669"/>
    <property type="project" value="UniProtKB-EC"/>
</dbReference>
<dbReference type="GO" id="GO:0010181">
    <property type="term" value="F:FMN binding"/>
    <property type="evidence" value="ECO:0007669"/>
    <property type="project" value="TreeGrafter"/>
</dbReference>
<dbReference type="Gene3D" id="3.40.50.360">
    <property type="match status" value="1"/>
</dbReference>
<dbReference type="InterPro" id="IPR029039">
    <property type="entry name" value="Flavoprotein-like_sf"/>
</dbReference>
<dbReference type="InterPro" id="IPR005025">
    <property type="entry name" value="FMN_Rdtase-like_dom"/>
</dbReference>
<dbReference type="InterPro" id="IPR050712">
    <property type="entry name" value="NAD(P)H-dep_reductase"/>
</dbReference>
<dbReference type="PANTHER" id="PTHR30543">
    <property type="entry name" value="CHROMATE REDUCTASE"/>
    <property type="match status" value="1"/>
</dbReference>
<dbReference type="PANTHER" id="PTHR30543:SF21">
    <property type="entry name" value="NAD(P)H-DEPENDENT FMN REDUCTASE LOT6"/>
    <property type="match status" value="1"/>
</dbReference>
<dbReference type="Pfam" id="PF03358">
    <property type="entry name" value="FMN_red"/>
    <property type="match status" value="1"/>
</dbReference>
<dbReference type="SUPFAM" id="SSF52218">
    <property type="entry name" value="Flavoproteins"/>
    <property type="match status" value="1"/>
</dbReference>